<protein>
    <recommendedName>
        <fullName evidence="3">ATP synthase subunit C lysine N-methyltransferase</fullName>
        <ecNumber evidence="1">2.1.1.-</ecNumber>
    </recommendedName>
    <alternativeName>
        <fullName evidence="3">Protein N-lysine methyltransferase FAM173B</fullName>
    </alternativeName>
</protein>
<sequence length="226" mass="25478">MSKSRKESKSLEEYSIVSSTSRPKKKKWGLVATGVIGGTLVALYAVATPFVAPALRKLCLPYVPATTTQVKNVLKMLRSRTGIVVDIGSGDGRIVIAAAKEGFQAVGYELNPWLVWYSRFRAWREGVHHHTRFYVSDLWKVSFSRYRNVVIFGVPQMMPQLEKKLQTELQDAARVIACRFPFPNWVPDHIFGEGVDTVWTYDLGAFRKVSDLKQVASKHCILDTTV</sequence>
<proteinExistence type="evidence at transcript level"/>
<feature type="chain" id="PRO_0000321538" description="ATP synthase subunit C lysine N-methyltransferase">
    <location>
        <begin position="1"/>
        <end position="226"/>
    </location>
</feature>
<feature type="transmembrane region" description="Helical" evidence="2">
    <location>
        <begin position="35"/>
        <end position="55"/>
    </location>
</feature>
<feature type="region of interest" description="Required for mitochondrial location" evidence="1">
    <location>
        <begin position="48"/>
        <end position="82"/>
    </location>
</feature>
<evidence type="ECO:0000250" key="1">
    <source>
        <dbReference type="UniProtKB" id="Q6P4H8"/>
    </source>
</evidence>
<evidence type="ECO:0000255" key="2"/>
<evidence type="ECO:0000305" key="3"/>
<keyword id="KW-0472">Membrane</keyword>
<keyword id="KW-0489">Methyltransferase</keyword>
<keyword id="KW-0496">Mitochondrion</keyword>
<keyword id="KW-1185">Reference proteome</keyword>
<keyword id="KW-0949">S-adenosyl-L-methionine</keyword>
<keyword id="KW-0808">Transferase</keyword>
<keyword id="KW-0812">Transmembrane</keyword>
<keyword id="KW-1133">Transmembrane helix</keyword>
<organism>
    <name type="scientific">Xenopus laevis</name>
    <name type="common">African clawed frog</name>
    <dbReference type="NCBI Taxonomy" id="8355"/>
    <lineage>
        <taxon>Eukaryota</taxon>
        <taxon>Metazoa</taxon>
        <taxon>Chordata</taxon>
        <taxon>Craniata</taxon>
        <taxon>Vertebrata</taxon>
        <taxon>Euteleostomi</taxon>
        <taxon>Amphibia</taxon>
        <taxon>Batrachia</taxon>
        <taxon>Anura</taxon>
        <taxon>Pipoidea</taxon>
        <taxon>Pipidae</taxon>
        <taxon>Xenopodinae</taxon>
        <taxon>Xenopus</taxon>
        <taxon>Xenopus</taxon>
    </lineage>
</organism>
<comment type="function">
    <text evidence="1">Mitochondrial protein-lysine N-methyltransferase that promotes chronic pain. Involved in persistent inflammatory and neuropathic pain: methyltransferase activity in the mitochondria of sensory neurons promotes chronic pain via a pathway that depends on the production of reactive oxygen species (ROS) and on the engagement of spinal cord microglia. Protein-lysine N-methyltransferase activity is dependent on S-adenosyl-L-methionine.</text>
</comment>
<comment type="subcellular location">
    <subcellularLocation>
        <location evidence="1">Mitochondrion membrane</location>
        <topology evidence="2">Single-pass membrane protein</topology>
    </subcellularLocation>
    <text evidence="1">Localizes to mitochondrial cristae.</text>
</comment>
<comment type="similarity">
    <text evidence="3">Belongs to the ANT/ATPSC lysine N-methyltransferase family.</text>
</comment>
<gene>
    <name type="primary">atpsckmt</name>
    <name type="synonym">fam173b</name>
</gene>
<name>ACKMT_XENLA</name>
<accession>Q5I047</accession>
<reference key="1">
    <citation type="submission" date="2004-12" db="EMBL/GenBank/DDBJ databases">
        <authorList>
            <consortium name="NIH - Xenopus Gene Collection (XGC) project"/>
        </authorList>
    </citation>
    <scope>NUCLEOTIDE SEQUENCE [LARGE SCALE MRNA]</scope>
    <source>
        <tissue>Testis</tissue>
    </source>
</reference>
<dbReference type="EC" id="2.1.1.-" evidence="1"/>
<dbReference type="EMBL" id="BC088716">
    <property type="protein sequence ID" value="AAH88716.1"/>
    <property type="molecule type" value="mRNA"/>
</dbReference>
<dbReference type="RefSeq" id="NP_001088917.1">
    <property type="nucleotide sequence ID" value="NM_001095448.1"/>
</dbReference>
<dbReference type="SMR" id="Q5I047"/>
<dbReference type="DNASU" id="496288"/>
<dbReference type="GeneID" id="496288"/>
<dbReference type="KEGG" id="xla:496288"/>
<dbReference type="AGR" id="Xenbase:XB-GENE-6252193"/>
<dbReference type="CTD" id="496288"/>
<dbReference type="Xenbase" id="XB-GENE-6252193">
    <property type="gene designation" value="atpsckmt.S"/>
</dbReference>
<dbReference type="OrthoDB" id="66144at2759"/>
<dbReference type="Proteomes" id="UP000186698">
    <property type="component" value="Chromosome 6S"/>
</dbReference>
<dbReference type="Bgee" id="496288">
    <property type="expression patterns" value="Expressed in muscle tissue and 20 other cell types or tissues"/>
</dbReference>
<dbReference type="GO" id="GO:0030061">
    <property type="term" value="C:mitochondrial crista"/>
    <property type="evidence" value="ECO:0000250"/>
    <property type="project" value="UniProtKB"/>
</dbReference>
<dbReference type="GO" id="GO:0005739">
    <property type="term" value="C:mitochondrion"/>
    <property type="evidence" value="ECO:0000250"/>
    <property type="project" value="UniProtKB"/>
</dbReference>
<dbReference type="GO" id="GO:0016279">
    <property type="term" value="F:protein-lysine N-methyltransferase activity"/>
    <property type="evidence" value="ECO:0000250"/>
    <property type="project" value="UniProtKB"/>
</dbReference>
<dbReference type="GO" id="GO:0018022">
    <property type="term" value="P:peptidyl-lysine methylation"/>
    <property type="evidence" value="ECO:0000250"/>
    <property type="project" value="UniProtKB"/>
</dbReference>
<dbReference type="GO" id="GO:0018023">
    <property type="term" value="P:peptidyl-lysine trimethylation"/>
    <property type="evidence" value="ECO:0000250"/>
    <property type="project" value="UniProtKB"/>
</dbReference>
<dbReference type="GO" id="GO:1905273">
    <property type="term" value="P:positive regulation of proton-transporting ATP synthase activity, rotational mechanism"/>
    <property type="evidence" value="ECO:0000250"/>
    <property type="project" value="UniProtKB"/>
</dbReference>
<dbReference type="GO" id="GO:1904058">
    <property type="term" value="P:positive regulation of sensory perception of pain"/>
    <property type="evidence" value="ECO:0000250"/>
    <property type="project" value="UniProtKB"/>
</dbReference>
<dbReference type="GO" id="GO:1905706">
    <property type="term" value="P:regulation of mitochondrial ATP synthesis coupled proton transport"/>
    <property type="evidence" value="ECO:0000250"/>
    <property type="project" value="UniProtKB"/>
</dbReference>
<dbReference type="FunFam" id="3.40.50.150:FF:000141">
    <property type="entry name" value="ATP synthase c subunit lysine N-methyltransferase"/>
    <property type="match status" value="1"/>
</dbReference>
<dbReference type="Gene3D" id="3.40.50.150">
    <property type="entry name" value="Vaccinia Virus protein VP39"/>
    <property type="match status" value="1"/>
</dbReference>
<dbReference type="InterPro" id="IPR026170">
    <property type="entry name" value="FAM173A/B"/>
</dbReference>
<dbReference type="InterPro" id="IPR029063">
    <property type="entry name" value="SAM-dependent_MTases_sf"/>
</dbReference>
<dbReference type="PANTHER" id="PTHR13610:SF8">
    <property type="entry name" value="ATP SYNTHASE SUBUNIT C LYSINE N-METHYLTRANSFERASE"/>
    <property type="match status" value="1"/>
</dbReference>
<dbReference type="PANTHER" id="PTHR13610">
    <property type="entry name" value="METHYLTRANSFERASE DOMAIN-CONTAINING PROTEIN"/>
    <property type="match status" value="1"/>
</dbReference>
<dbReference type="SUPFAM" id="SSF53335">
    <property type="entry name" value="S-adenosyl-L-methionine-dependent methyltransferases"/>
    <property type="match status" value="1"/>
</dbReference>